<accession>Q07397</accession>
<dbReference type="EC" id="3.5.1.5" evidence="1"/>
<dbReference type="EMBL" id="D14439">
    <property type="protein sequence ID" value="BAA03325.1"/>
    <property type="molecule type" value="Genomic_DNA"/>
</dbReference>
<dbReference type="PIR" id="C36950">
    <property type="entry name" value="C36950"/>
</dbReference>
<dbReference type="SMR" id="Q07397"/>
<dbReference type="MEROPS" id="M38.982"/>
<dbReference type="UniPathway" id="UPA00258">
    <property type="reaction ID" value="UER00370"/>
</dbReference>
<dbReference type="GO" id="GO:0005737">
    <property type="term" value="C:cytoplasm"/>
    <property type="evidence" value="ECO:0007669"/>
    <property type="project" value="UniProtKB-SubCell"/>
</dbReference>
<dbReference type="GO" id="GO:0016151">
    <property type="term" value="F:nickel cation binding"/>
    <property type="evidence" value="ECO:0007669"/>
    <property type="project" value="UniProtKB-UniRule"/>
</dbReference>
<dbReference type="GO" id="GO:0009039">
    <property type="term" value="F:urease activity"/>
    <property type="evidence" value="ECO:0007669"/>
    <property type="project" value="UniProtKB-UniRule"/>
</dbReference>
<dbReference type="GO" id="GO:0043419">
    <property type="term" value="P:urea catabolic process"/>
    <property type="evidence" value="ECO:0007669"/>
    <property type="project" value="UniProtKB-UniRule"/>
</dbReference>
<dbReference type="CDD" id="cd00375">
    <property type="entry name" value="Urease_alpha"/>
    <property type="match status" value="1"/>
</dbReference>
<dbReference type="Gene3D" id="3.20.20.140">
    <property type="entry name" value="Metal-dependent hydrolases"/>
    <property type="match status" value="1"/>
</dbReference>
<dbReference type="Gene3D" id="2.30.40.10">
    <property type="entry name" value="Urease, subunit C, domain 1"/>
    <property type="match status" value="1"/>
</dbReference>
<dbReference type="HAMAP" id="MF_01953">
    <property type="entry name" value="Urease_alpha"/>
    <property type="match status" value="1"/>
</dbReference>
<dbReference type="InterPro" id="IPR006680">
    <property type="entry name" value="Amidohydro-rel"/>
</dbReference>
<dbReference type="InterPro" id="IPR011059">
    <property type="entry name" value="Metal-dep_hydrolase_composite"/>
</dbReference>
<dbReference type="InterPro" id="IPR032466">
    <property type="entry name" value="Metal_Hydrolase"/>
</dbReference>
<dbReference type="InterPro" id="IPR011612">
    <property type="entry name" value="Urease_alpha_N_dom"/>
</dbReference>
<dbReference type="InterPro" id="IPR050112">
    <property type="entry name" value="Urease_alpha_subunit"/>
</dbReference>
<dbReference type="InterPro" id="IPR017950">
    <property type="entry name" value="Urease_AS"/>
</dbReference>
<dbReference type="InterPro" id="IPR005848">
    <property type="entry name" value="Urease_asu"/>
</dbReference>
<dbReference type="InterPro" id="IPR017951">
    <property type="entry name" value="Urease_asu_c"/>
</dbReference>
<dbReference type="InterPro" id="IPR029754">
    <property type="entry name" value="Urease_Ni-bd"/>
</dbReference>
<dbReference type="NCBIfam" id="NF009685">
    <property type="entry name" value="PRK13206.1"/>
    <property type="match status" value="1"/>
</dbReference>
<dbReference type="NCBIfam" id="NF009686">
    <property type="entry name" value="PRK13207.1"/>
    <property type="match status" value="1"/>
</dbReference>
<dbReference type="NCBIfam" id="TIGR01792">
    <property type="entry name" value="urease_alph"/>
    <property type="match status" value="1"/>
</dbReference>
<dbReference type="PANTHER" id="PTHR43440">
    <property type="entry name" value="UREASE"/>
    <property type="match status" value="1"/>
</dbReference>
<dbReference type="PANTHER" id="PTHR43440:SF1">
    <property type="entry name" value="UREASE"/>
    <property type="match status" value="1"/>
</dbReference>
<dbReference type="Pfam" id="PF01979">
    <property type="entry name" value="Amidohydro_1"/>
    <property type="match status" value="1"/>
</dbReference>
<dbReference type="Pfam" id="PF00449">
    <property type="entry name" value="Urease_alpha"/>
    <property type="match status" value="1"/>
</dbReference>
<dbReference type="PRINTS" id="PR01752">
    <property type="entry name" value="UREASE"/>
</dbReference>
<dbReference type="SUPFAM" id="SSF51338">
    <property type="entry name" value="Composite domain of metallo-dependent hydrolases"/>
    <property type="match status" value="1"/>
</dbReference>
<dbReference type="SUPFAM" id="SSF51556">
    <property type="entry name" value="Metallo-dependent hydrolases"/>
    <property type="match status" value="1"/>
</dbReference>
<dbReference type="PROSITE" id="PS01120">
    <property type="entry name" value="UREASE_1"/>
    <property type="match status" value="1"/>
</dbReference>
<dbReference type="PROSITE" id="PS00145">
    <property type="entry name" value="UREASE_2"/>
    <property type="match status" value="1"/>
</dbReference>
<dbReference type="PROSITE" id="PS51368">
    <property type="entry name" value="UREASE_3"/>
    <property type="match status" value="1"/>
</dbReference>
<evidence type="ECO:0000255" key="1">
    <source>
        <dbReference type="HAMAP-Rule" id="MF_01953"/>
    </source>
</evidence>
<feature type="chain" id="PRO_0000067537" description="Urease subunit alpha">
    <location>
        <begin position="1"/>
        <end position="569"/>
    </location>
</feature>
<feature type="domain" description="Urease" evidence="1">
    <location>
        <begin position="131"/>
        <end position="569"/>
    </location>
</feature>
<feature type="active site" description="Proton donor" evidence="1">
    <location>
        <position position="322"/>
    </location>
</feature>
<feature type="binding site" evidence="1">
    <location>
        <position position="136"/>
    </location>
    <ligand>
        <name>Ni(2+)</name>
        <dbReference type="ChEBI" id="CHEBI:49786"/>
        <label>1</label>
    </ligand>
</feature>
<feature type="binding site" evidence="1">
    <location>
        <position position="138"/>
    </location>
    <ligand>
        <name>Ni(2+)</name>
        <dbReference type="ChEBI" id="CHEBI:49786"/>
        <label>1</label>
    </ligand>
</feature>
<feature type="binding site" description="via carbamate group" evidence="1">
    <location>
        <position position="219"/>
    </location>
    <ligand>
        <name>Ni(2+)</name>
        <dbReference type="ChEBI" id="CHEBI:49786"/>
        <label>1</label>
    </ligand>
</feature>
<feature type="binding site" description="via carbamate group" evidence="1">
    <location>
        <position position="219"/>
    </location>
    <ligand>
        <name>Ni(2+)</name>
        <dbReference type="ChEBI" id="CHEBI:49786"/>
        <label>2</label>
    </ligand>
</feature>
<feature type="binding site" evidence="1">
    <location>
        <position position="221"/>
    </location>
    <ligand>
        <name>substrate</name>
    </ligand>
</feature>
<feature type="binding site" evidence="1">
    <location>
        <position position="248"/>
    </location>
    <ligand>
        <name>Ni(2+)</name>
        <dbReference type="ChEBI" id="CHEBI:49786"/>
        <label>2</label>
    </ligand>
</feature>
<feature type="binding site" evidence="1">
    <location>
        <position position="274"/>
    </location>
    <ligand>
        <name>Ni(2+)</name>
        <dbReference type="ChEBI" id="CHEBI:49786"/>
        <label>2</label>
    </ligand>
</feature>
<feature type="binding site" evidence="1">
    <location>
        <position position="362"/>
    </location>
    <ligand>
        <name>Ni(2+)</name>
        <dbReference type="ChEBI" id="CHEBI:49786"/>
        <label>1</label>
    </ligand>
</feature>
<feature type="modified residue" description="N6-carboxylysine" evidence="1">
    <location>
        <position position="219"/>
    </location>
</feature>
<name>URE1_BACSB</name>
<comment type="catalytic activity">
    <reaction evidence="1">
        <text>urea + 2 H2O + H(+) = hydrogencarbonate + 2 NH4(+)</text>
        <dbReference type="Rhea" id="RHEA:20557"/>
        <dbReference type="ChEBI" id="CHEBI:15377"/>
        <dbReference type="ChEBI" id="CHEBI:15378"/>
        <dbReference type="ChEBI" id="CHEBI:16199"/>
        <dbReference type="ChEBI" id="CHEBI:17544"/>
        <dbReference type="ChEBI" id="CHEBI:28938"/>
        <dbReference type="EC" id="3.5.1.5"/>
    </reaction>
</comment>
<comment type="cofactor">
    <cofactor evidence="1">
        <name>Ni cation</name>
        <dbReference type="ChEBI" id="CHEBI:25516"/>
    </cofactor>
    <text evidence="1">Binds 2 nickel ions per subunit.</text>
</comment>
<comment type="pathway">
    <text evidence="1">Nitrogen metabolism; urea degradation; CO(2) and NH(3) from urea (urease route): step 1/1.</text>
</comment>
<comment type="subunit">
    <text evidence="1">Heterotrimer of UreA (gamma), UreB (beta) and UreC (alpha) subunits. Three heterotrimers associate to form the active enzyme.</text>
</comment>
<comment type="subcellular location">
    <subcellularLocation>
        <location evidence="1">Cytoplasm</location>
    </subcellularLocation>
</comment>
<comment type="PTM">
    <text evidence="1">Carboxylation allows a single lysine to coordinate two nickel ions.</text>
</comment>
<comment type="similarity">
    <text evidence="1">Belongs to the metallo-dependent hydrolases superfamily. Urease alpha subunit family.</text>
</comment>
<sequence length="569" mass="61397">MSFSMSRKQYADMFGPTVGDAIRLADSELFIEIEKDYTTYGDEVKFGGGKVIRDGMGQHPLATSDECVDLVLTNAIIVDYTGIYKADIGIKDGMIASIGKAGNPLLMDGVDMVIGAATEVIAAEGMIVTAGGIDAHIHFICPQQIETALASGVTTMIGGGTGPATGTNATTCTPGPWNIHRMLQAAEEFPINLGFLGKGNCSDEAPLKEQIEAGAVGLKLHEDWGSTAAAIDTCLKVADRYDVQVAIHTDTLNEGGFVEDTLKAIDGRVIHTYHTEGAGGGHAPDIIKAAGFPNILPSSTNPTRPYTINTLEEHLDMLMVCHHLDANIPEDIAFADSRIRKETIAAEDVLHDLGVFSMISSDSQAMGRVGEVIIRTWQTADKMKKQRGKLQEDNGVGDNFRVKRYIAKYTINPAIAHGIADYVGSVEVGKLADLVVWNPAFFGVKPELVLKGGMIAYSTMGDPNASIPTPQPVLYRPMFAAKGDAKYQTSITFVSKAAYEKGIHEQLGLKKKVKPVHGIRKLTKKDLILNDKTPKIDVDPQTYEVKVDGQLVTCEPAEIVPMAQRYFLF</sequence>
<reference key="1">
    <citation type="journal article" date="1994" name="J. Bacteriol.">
        <title>Cloning, sequencing, and expression of thermophilic Bacillus sp. strain TB-90 urease gene complex in Escherichia coli.</title>
        <authorList>
            <person name="Maeda M."/>
            <person name="Hidaka M."/>
            <person name="Nakamura A."/>
            <person name="Masaki H."/>
            <person name="Uozumi T."/>
        </authorList>
    </citation>
    <scope>NUCLEOTIDE SEQUENCE [GENOMIC DNA]</scope>
    <scope>PARTIAL PROTEIN SEQUENCE</scope>
</reference>
<protein>
    <recommendedName>
        <fullName evidence="1">Urease subunit alpha</fullName>
        <ecNumber evidence="1">3.5.1.5</ecNumber>
    </recommendedName>
    <alternativeName>
        <fullName evidence="1">Urea amidohydrolase subunit alpha</fullName>
    </alternativeName>
</protein>
<gene>
    <name evidence="1" type="primary">ureC</name>
</gene>
<keyword id="KW-0963">Cytoplasm</keyword>
<keyword id="KW-0903">Direct protein sequencing</keyword>
<keyword id="KW-0378">Hydrolase</keyword>
<keyword id="KW-0479">Metal-binding</keyword>
<keyword id="KW-0533">Nickel</keyword>
<proteinExistence type="evidence at protein level"/>
<organism>
    <name type="scientific">Bacillus sp. (strain TB-90)</name>
    <dbReference type="NCBI Taxonomy" id="36824"/>
    <lineage>
        <taxon>Bacteria</taxon>
        <taxon>Bacillati</taxon>
        <taxon>Bacillota</taxon>
        <taxon>Bacilli</taxon>
        <taxon>Bacillales</taxon>
        <taxon>Bacillaceae</taxon>
        <taxon>Bacillus</taxon>
    </lineage>
</organism>